<keyword id="KW-0004">4Fe-4S</keyword>
<keyword id="KW-0963">Cytoplasm</keyword>
<keyword id="KW-0408">Iron</keyword>
<keyword id="KW-0411">Iron-sulfur</keyword>
<keyword id="KW-0479">Metal-binding</keyword>
<keyword id="KW-0949">S-adenosyl-L-methionine</keyword>
<keyword id="KW-0808">Transferase</keyword>
<evidence type="ECO:0000255" key="1">
    <source>
        <dbReference type="HAMAP-Rule" id="MF_00206"/>
    </source>
</evidence>
<evidence type="ECO:0000255" key="2">
    <source>
        <dbReference type="PROSITE-ProRule" id="PRU01266"/>
    </source>
</evidence>
<dbReference type="EC" id="2.8.1.8" evidence="1"/>
<dbReference type="EMBL" id="CP000813">
    <property type="protein sequence ID" value="ABV63551.1"/>
    <property type="molecule type" value="Genomic_DNA"/>
</dbReference>
<dbReference type="RefSeq" id="WP_012011155.1">
    <property type="nucleotide sequence ID" value="NZ_VEIC01000005.1"/>
</dbReference>
<dbReference type="SMR" id="A8FH34"/>
<dbReference type="STRING" id="315750.BPUM_2896"/>
<dbReference type="GeneID" id="5622185"/>
<dbReference type="KEGG" id="bpu:BPUM_2896"/>
<dbReference type="eggNOG" id="COG0320">
    <property type="taxonomic scope" value="Bacteria"/>
</dbReference>
<dbReference type="HOGENOM" id="CLU_033144_2_1_9"/>
<dbReference type="OrthoDB" id="9787898at2"/>
<dbReference type="Proteomes" id="UP000001355">
    <property type="component" value="Chromosome"/>
</dbReference>
<dbReference type="GO" id="GO:0005737">
    <property type="term" value="C:cytoplasm"/>
    <property type="evidence" value="ECO:0007669"/>
    <property type="project" value="UniProtKB-SubCell"/>
</dbReference>
<dbReference type="GO" id="GO:0051539">
    <property type="term" value="F:4 iron, 4 sulfur cluster binding"/>
    <property type="evidence" value="ECO:0007669"/>
    <property type="project" value="UniProtKB-UniRule"/>
</dbReference>
<dbReference type="GO" id="GO:0016992">
    <property type="term" value="F:lipoate synthase activity"/>
    <property type="evidence" value="ECO:0007669"/>
    <property type="project" value="UniProtKB-UniRule"/>
</dbReference>
<dbReference type="GO" id="GO:0046872">
    <property type="term" value="F:metal ion binding"/>
    <property type="evidence" value="ECO:0007669"/>
    <property type="project" value="UniProtKB-KW"/>
</dbReference>
<dbReference type="CDD" id="cd01335">
    <property type="entry name" value="Radical_SAM"/>
    <property type="match status" value="1"/>
</dbReference>
<dbReference type="FunFam" id="3.20.20.70:FF:000040">
    <property type="entry name" value="Lipoyl synthase"/>
    <property type="match status" value="1"/>
</dbReference>
<dbReference type="Gene3D" id="3.20.20.70">
    <property type="entry name" value="Aldolase class I"/>
    <property type="match status" value="1"/>
</dbReference>
<dbReference type="HAMAP" id="MF_00206">
    <property type="entry name" value="Lipoyl_synth"/>
    <property type="match status" value="1"/>
</dbReference>
<dbReference type="InterPro" id="IPR013785">
    <property type="entry name" value="Aldolase_TIM"/>
</dbReference>
<dbReference type="InterPro" id="IPR006638">
    <property type="entry name" value="Elp3/MiaA/NifB-like_rSAM"/>
</dbReference>
<dbReference type="InterPro" id="IPR031691">
    <property type="entry name" value="LIAS_N"/>
</dbReference>
<dbReference type="InterPro" id="IPR003698">
    <property type="entry name" value="Lipoyl_synth"/>
</dbReference>
<dbReference type="InterPro" id="IPR007197">
    <property type="entry name" value="rSAM"/>
</dbReference>
<dbReference type="NCBIfam" id="TIGR00510">
    <property type="entry name" value="lipA"/>
    <property type="match status" value="1"/>
</dbReference>
<dbReference type="NCBIfam" id="NF004019">
    <property type="entry name" value="PRK05481.1"/>
    <property type="match status" value="1"/>
</dbReference>
<dbReference type="NCBIfam" id="NF009544">
    <property type="entry name" value="PRK12928.1"/>
    <property type="match status" value="1"/>
</dbReference>
<dbReference type="PANTHER" id="PTHR10949">
    <property type="entry name" value="LIPOYL SYNTHASE"/>
    <property type="match status" value="1"/>
</dbReference>
<dbReference type="PANTHER" id="PTHR10949:SF0">
    <property type="entry name" value="LIPOYL SYNTHASE, MITOCHONDRIAL"/>
    <property type="match status" value="1"/>
</dbReference>
<dbReference type="Pfam" id="PF16881">
    <property type="entry name" value="LIAS_N"/>
    <property type="match status" value="1"/>
</dbReference>
<dbReference type="Pfam" id="PF04055">
    <property type="entry name" value="Radical_SAM"/>
    <property type="match status" value="1"/>
</dbReference>
<dbReference type="PIRSF" id="PIRSF005963">
    <property type="entry name" value="Lipoyl_synth"/>
    <property type="match status" value="1"/>
</dbReference>
<dbReference type="SFLD" id="SFLDF00271">
    <property type="entry name" value="lipoyl_synthase"/>
    <property type="match status" value="1"/>
</dbReference>
<dbReference type="SFLD" id="SFLDS00029">
    <property type="entry name" value="Radical_SAM"/>
    <property type="match status" value="1"/>
</dbReference>
<dbReference type="SMART" id="SM00729">
    <property type="entry name" value="Elp3"/>
    <property type="match status" value="1"/>
</dbReference>
<dbReference type="SUPFAM" id="SSF102114">
    <property type="entry name" value="Radical SAM enzymes"/>
    <property type="match status" value="1"/>
</dbReference>
<dbReference type="PROSITE" id="PS51918">
    <property type="entry name" value="RADICAL_SAM"/>
    <property type="match status" value="1"/>
</dbReference>
<sequence>MAKKEEHVRKPDWLKIKLNTNENYTGLKKMMRENNLNTVCEEAKCPNIHECWAVRRTATFMILGSVCTRACRFCAVKTGLPTELDLQEPERVADSVALMNLKHAVITAVARDDQKDGGAGVFAETVRAIRRKSPFTTIEVLPSDMGGNYDNLKTLMDTRPDILNHNIETVRRLTPRVRARATYDRSLEFLRRAKEMQPDIPTKSSIMIGLGETKEEIIEVMDDLLANNVDIMAIGQYLQPSKKHLKVQKYYHPDEFAELKEIAMAKGFSHCEAGPLVRSSYHADEQVNEASKKRQAQA</sequence>
<protein>
    <recommendedName>
        <fullName evidence="1">Lipoyl synthase</fullName>
        <ecNumber evidence="1">2.8.1.8</ecNumber>
    </recommendedName>
    <alternativeName>
        <fullName evidence="1">Lip-syn</fullName>
        <shortName evidence="1">LS</shortName>
    </alternativeName>
    <alternativeName>
        <fullName evidence="1">Lipoate synthase</fullName>
    </alternativeName>
    <alternativeName>
        <fullName evidence="1">Lipoic acid synthase</fullName>
    </alternativeName>
    <alternativeName>
        <fullName evidence="1">Sulfur insertion protein LipA</fullName>
    </alternativeName>
</protein>
<feature type="chain" id="PRO_1000058573" description="Lipoyl synthase">
    <location>
        <begin position="1"/>
        <end position="298"/>
    </location>
</feature>
<feature type="domain" description="Radical SAM core" evidence="2">
    <location>
        <begin position="53"/>
        <end position="269"/>
    </location>
</feature>
<feature type="binding site" evidence="1">
    <location>
        <position position="40"/>
    </location>
    <ligand>
        <name>[4Fe-4S] cluster</name>
        <dbReference type="ChEBI" id="CHEBI:49883"/>
        <label>1</label>
    </ligand>
</feature>
<feature type="binding site" evidence="1">
    <location>
        <position position="45"/>
    </location>
    <ligand>
        <name>[4Fe-4S] cluster</name>
        <dbReference type="ChEBI" id="CHEBI:49883"/>
        <label>1</label>
    </ligand>
</feature>
<feature type="binding site" evidence="1">
    <location>
        <position position="51"/>
    </location>
    <ligand>
        <name>[4Fe-4S] cluster</name>
        <dbReference type="ChEBI" id="CHEBI:49883"/>
        <label>1</label>
    </ligand>
</feature>
<feature type="binding site" evidence="1">
    <location>
        <position position="67"/>
    </location>
    <ligand>
        <name>[4Fe-4S] cluster</name>
        <dbReference type="ChEBI" id="CHEBI:49883"/>
        <label>2</label>
        <note>4Fe-4S-S-AdoMet</note>
    </ligand>
</feature>
<feature type="binding site" evidence="1">
    <location>
        <position position="71"/>
    </location>
    <ligand>
        <name>[4Fe-4S] cluster</name>
        <dbReference type="ChEBI" id="CHEBI:49883"/>
        <label>2</label>
        <note>4Fe-4S-S-AdoMet</note>
    </ligand>
</feature>
<feature type="binding site" evidence="1">
    <location>
        <position position="74"/>
    </location>
    <ligand>
        <name>[4Fe-4S] cluster</name>
        <dbReference type="ChEBI" id="CHEBI:49883"/>
        <label>2</label>
        <note>4Fe-4S-S-AdoMet</note>
    </ligand>
</feature>
<feature type="binding site" evidence="1">
    <location>
        <position position="280"/>
    </location>
    <ligand>
        <name>[4Fe-4S] cluster</name>
        <dbReference type="ChEBI" id="CHEBI:49883"/>
        <label>1</label>
    </ligand>
</feature>
<gene>
    <name evidence="1" type="primary">lipA</name>
    <name type="ordered locus">BPUM_2896</name>
</gene>
<comment type="function">
    <text evidence="1">Catalyzes the radical-mediated insertion of two sulfur atoms into the C-6 and C-8 positions of the octanoyl moiety bound to the lipoyl domains of lipoate-dependent enzymes, thereby converting the octanoylated domains into lipoylated derivatives.</text>
</comment>
<comment type="catalytic activity">
    <reaction evidence="1">
        <text>[[Fe-S] cluster scaffold protein carrying a second [4Fe-4S](2+) cluster] + N(6)-octanoyl-L-lysyl-[protein] + 2 oxidized [2Fe-2S]-[ferredoxin] + 2 S-adenosyl-L-methionine + 4 H(+) = [[Fe-S] cluster scaffold protein] + N(6)-[(R)-dihydrolipoyl]-L-lysyl-[protein] + 4 Fe(3+) + 2 hydrogen sulfide + 2 5'-deoxyadenosine + 2 L-methionine + 2 reduced [2Fe-2S]-[ferredoxin]</text>
        <dbReference type="Rhea" id="RHEA:16585"/>
        <dbReference type="Rhea" id="RHEA-COMP:9928"/>
        <dbReference type="Rhea" id="RHEA-COMP:10000"/>
        <dbReference type="Rhea" id="RHEA-COMP:10001"/>
        <dbReference type="Rhea" id="RHEA-COMP:10475"/>
        <dbReference type="Rhea" id="RHEA-COMP:14568"/>
        <dbReference type="Rhea" id="RHEA-COMP:14569"/>
        <dbReference type="ChEBI" id="CHEBI:15378"/>
        <dbReference type="ChEBI" id="CHEBI:17319"/>
        <dbReference type="ChEBI" id="CHEBI:29034"/>
        <dbReference type="ChEBI" id="CHEBI:29919"/>
        <dbReference type="ChEBI" id="CHEBI:33722"/>
        <dbReference type="ChEBI" id="CHEBI:33737"/>
        <dbReference type="ChEBI" id="CHEBI:33738"/>
        <dbReference type="ChEBI" id="CHEBI:57844"/>
        <dbReference type="ChEBI" id="CHEBI:59789"/>
        <dbReference type="ChEBI" id="CHEBI:78809"/>
        <dbReference type="ChEBI" id="CHEBI:83100"/>
        <dbReference type="EC" id="2.8.1.8"/>
    </reaction>
</comment>
<comment type="cofactor">
    <cofactor evidence="1">
        <name>[4Fe-4S] cluster</name>
        <dbReference type="ChEBI" id="CHEBI:49883"/>
    </cofactor>
    <text evidence="1">Binds 2 [4Fe-4S] clusters per subunit. One cluster is coordinated with 3 cysteines and an exchangeable S-adenosyl-L-methionine.</text>
</comment>
<comment type="pathway">
    <text evidence="1">Protein modification; protein lipoylation via endogenous pathway; protein N(6)-(lipoyl)lysine from octanoyl-[acyl-carrier-protein].</text>
</comment>
<comment type="subcellular location">
    <subcellularLocation>
        <location evidence="1">Cytoplasm</location>
    </subcellularLocation>
</comment>
<comment type="similarity">
    <text evidence="1">Belongs to the radical SAM superfamily. Lipoyl synthase family.</text>
</comment>
<reference key="1">
    <citation type="journal article" date="2007" name="PLoS ONE">
        <title>Paradoxical DNA repair and peroxide resistance gene conservation in Bacillus pumilus SAFR-032.</title>
        <authorList>
            <person name="Gioia J."/>
            <person name="Yerrapragada S."/>
            <person name="Qin X."/>
            <person name="Jiang H."/>
            <person name="Igboeli O.C."/>
            <person name="Muzny D."/>
            <person name="Dugan-Rocha S."/>
            <person name="Ding Y."/>
            <person name="Hawes A."/>
            <person name="Liu W."/>
            <person name="Perez L."/>
            <person name="Kovar C."/>
            <person name="Dinh H."/>
            <person name="Lee S."/>
            <person name="Nazareth L."/>
            <person name="Blyth P."/>
            <person name="Holder M."/>
            <person name="Buhay C."/>
            <person name="Tirumalai M.R."/>
            <person name="Liu Y."/>
            <person name="Dasgupta I."/>
            <person name="Bokhetache L."/>
            <person name="Fujita M."/>
            <person name="Karouia F."/>
            <person name="Eswara Moorthy P."/>
            <person name="Siefert J."/>
            <person name="Uzman A."/>
            <person name="Buzumbo P."/>
            <person name="Verma A."/>
            <person name="Zwiya H."/>
            <person name="McWilliams B.D."/>
            <person name="Olowu A."/>
            <person name="Clinkenbeard K.D."/>
            <person name="Newcombe D."/>
            <person name="Golebiewski L."/>
            <person name="Petrosino J.F."/>
            <person name="Nicholson W.L."/>
            <person name="Fox G.E."/>
            <person name="Venkateswaran K."/>
            <person name="Highlander S.K."/>
            <person name="Weinstock G.M."/>
        </authorList>
    </citation>
    <scope>NUCLEOTIDE SEQUENCE [LARGE SCALE GENOMIC DNA]</scope>
    <source>
        <strain>SAFR-032</strain>
    </source>
</reference>
<organism>
    <name type="scientific">Bacillus pumilus (strain SAFR-032)</name>
    <dbReference type="NCBI Taxonomy" id="315750"/>
    <lineage>
        <taxon>Bacteria</taxon>
        <taxon>Bacillati</taxon>
        <taxon>Bacillota</taxon>
        <taxon>Bacilli</taxon>
        <taxon>Bacillales</taxon>
        <taxon>Bacillaceae</taxon>
        <taxon>Bacillus</taxon>
    </lineage>
</organism>
<accession>A8FH34</accession>
<name>LIPA_BACP2</name>
<proteinExistence type="inferred from homology"/>